<protein>
    <recommendedName>
        <fullName evidence="1">Fluoride-specific ion channel FluC 1</fullName>
    </recommendedName>
</protein>
<evidence type="ECO:0000255" key="1">
    <source>
        <dbReference type="HAMAP-Rule" id="MF_00454"/>
    </source>
</evidence>
<keyword id="KW-1003">Cell membrane</keyword>
<keyword id="KW-0407">Ion channel</keyword>
<keyword id="KW-0406">Ion transport</keyword>
<keyword id="KW-0472">Membrane</keyword>
<keyword id="KW-0479">Metal-binding</keyword>
<keyword id="KW-0915">Sodium</keyword>
<keyword id="KW-0812">Transmembrane</keyword>
<keyword id="KW-1133">Transmembrane helix</keyword>
<keyword id="KW-0813">Transport</keyword>
<sequence>MLVNFVLVGFGAALGAMLRYGISVLVKSKWKTNFPFATFFINITGSFLLGFLVSSALGPVWQLFLGTGFMGGYTTFSTFKVESMELKWKTNYRVLFSYLGCTYVFGLIAAFLGLMLGV</sequence>
<reference key="1">
    <citation type="journal article" date="2004" name="Nucleic Acids Res.">
        <title>Whole genome comparisons of serotype 4b and 1/2a strains of the food-borne pathogen Listeria monocytogenes reveal new insights into the core genome components of this species.</title>
        <authorList>
            <person name="Nelson K.E."/>
            <person name="Fouts D.E."/>
            <person name="Mongodin E.F."/>
            <person name="Ravel J."/>
            <person name="DeBoy R.T."/>
            <person name="Kolonay J.F."/>
            <person name="Rasko D.A."/>
            <person name="Angiuoli S.V."/>
            <person name="Gill S.R."/>
            <person name="Paulsen I.T."/>
            <person name="Peterson J.D."/>
            <person name="White O."/>
            <person name="Nelson W.C."/>
            <person name="Nierman W.C."/>
            <person name="Beanan M.J."/>
            <person name="Brinkac L.M."/>
            <person name="Daugherty S.C."/>
            <person name="Dodson R.J."/>
            <person name="Durkin A.S."/>
            <person name="Madupu R."/>
            <person name="Haft D.H."/>
            <person name="Selengut J."/>
            <person name="Van Aken S.E."/>
            <person name="Khouri H.M."/>
            <person name="Fedorova N."/>
            <person name="Forberger H.A."/>
            <person name="Tran B."/>
            <person name="Kathariou S."/>
            <person name="Wonderling L.D."/>
            <person name="Uhlich G.A."/>
            <person name="Bayles D.O."/>
            <person name="Luchansky J.B."/>
            <person name="Fraser C.M."/>
        </authorList>
    </citation>
    <scope>NUCLEOTIDE SEQUENCE [LARGE SCALE GENOMIC DNA]</scope>
    <source>
        <strain>F2365</strain>
    </source>
</reference>
<gene>
    <name evidence="1" type="primary">fluC1</name>
    <name evidence="1" type="synonym">crcB1</name>
    <name type="ordered locus">LMOf2365_2113</name>
</gene>
<name>FLUC1_LISMF</name>
<feature type="chain" id="PRO_0000110127" description="Fluoride-specific ion channel FluC 1">
    <location>
        <begin position="1"/>
        <end position="118"/>
    </location>
</feature>
<feature type="transmembrane region" description="Helical" evidence="1">
    <location>
        <begin position="5"/>
        <end position="25"/>
    </location>
</feature>
<feature type="transmembrane region" description="Helical" evidence="1">
    <location>
        <begin position="34"/>
        <end position="54"/>
    </location>
</feature>
<feature type="transmembrane region" description="Helical" evidence="1">
    <location>
        <begin position="56"/>
        <end position="76"/>
    </location>
</feature>
<feature type="transmembrane region" description="Helical" evidence="1">
    <location>
        <begin position="98"/>
        <end position="118"/>
    </location>
</feature>
<feature type="binding site" evidence="1">
    <location>
        <position position="71"/>
    </location>
    <ligand>
        <name>Na(+)</name>
        <dbReference type="ChEBI" id="CHEBI:29101"/>
        <note>structural</note>
    </ligand>
</feature>
<feature type="binding site" evidence="1">
    <location>
        <position position="74"/>
    </location>
    <ligand>
        <name>Na(+)</name>
        <dbReference type="ChEBI" id="CHEBI:29101"/>
        <note>structural</note>
    </ligand>
</feature>
<accession>Q71XT2</accession>
<comment type="function">
    <text evidence="1">Fluoride-specific ion channel. Important for reducing fluoride concentration in the cell, thus reducing its toxicity.</text>
</comment>
<comment type="catalytic activity">
    <reaction evidence="1">
        <text>fluoride(in) = fluoride(out)</text>
        <dbReference type="Rhea" id="RHEA:76159"/>
        <dbReference type="ChEBI" id="CHEBI:17051"/>
    </reaction>
    <physiologicalReaction direction="left-to-right" evidence="1">
        <dbReference type="Rhea" id="RHEA:76160"/>
    </physiologicalReaction>
</comment>
<comment type="activity regulation">
    <text evidence="1">Na(+) is not transported, but it plays an essential structural role and its presence is essential for fluoride channel function.</text>
</comment>
<comment type="subcellular location">
    <subcellularLocation>
        <location evidence="1">Cell membrane</location>
        <topology evidence="1">Multi-pass membrane protein</topology>
    </subcellularLocation>
</comment>
<comment type="similarity">
    <text evidence="1">Belongs to the fluoride channel Fluc/FEX (TC 1.A.43) family.</text>
</comment>
<proteinExistence type="inferred from homology"/>
<dbReference type="EMBL" id="AE017262">
    <property type="protein sequence ID" value="AAT04883.1"/>
    <property type="molecule type" value="Genomic_DNA"/>
</dbReference>
<dbReference type="SMR" id="Q71XT2"/>
<dbReference type="KEGG" id="lmf:LMOf2365_2113"/>
<dbReference type="HOGENOM" id="CLU_114342_2_3_9"/>
<dbReference type="GO" id="GO:0005886">
    <property type="term" value="C:plasma membrane"/>
    <property type="evidence" value="ECO:0007669"/>
    <property type="project" value="UniProtKB-SubCell"/>
</dbReference>
<dbReference type="GO" id="GO:0062054">
    <property type="term" value="F:fluoride channel activity"/>
    <property type="evidence" value="ECO:0007669"/>
    <property type="project" value="UniProtKB-UniRule"/>
</dbReference>
<dbReference type="GO" id="GO:0046872">
    <property type="term" value="F:metal ion binding"/>
    <property type="evidence" value="ECO:0007669"/>
    <property type="project" value="UniProtKB-KW"/>
</dbReference>
<dbReference type="GO" id="GO:0140114">
    <property type="term" value="P:cellular detoxification of fluoride"/>
    <property type="evidence" value="ECO:0007669"/>
    <property type="project" value="UniProtKB-UniRule"/>
</dbReference>
<dbReference type="HAMAP" id="MF_00454">
    <property type="entry name" value="FluC"/>
    <property type="match status" value="1"/>
</dbReference>
<dbReference type="InterPro" id="IPR003691">
    <property type="entry name" value="FluC"/>
</dbReference>
<dbReference type="NCBIfam" id="NF010801">
    <property type="entry name" value="PRK14205.1"/>
    <property type="match status" value="1"/>
</dbReference>
<dbReference type="NCBIfam" id="NF010810">
    <property type="entry name" value="PRK14214.1"/>
    <property type="match status" value="1"/>
</dbReference>
<dbReference type="PANTHER" id="PTHR28259">
    <property type="entry name" value="FLUORIDE EXPORT PROTEIN 1-RELATED"/>
    <property type="match status" value="1"/>
</dbReference>
<dbReference type="PANTHER" id="PTHR28259:SF16">
    <property type="entry name" value="FLUORIDE-SPECIFIC ION CHANNEL FLUC 2"/>
    <property type="match status" value="1"/>
</dbReference>
<dbReference type="Pfam" id="PF02537">
    <property type="entry name" value="CRCB"/>
    <property type="match status" value="1"/>
</dbReference>
<organism>
    <name type="scientific">Listeria monocytogenes serotype 4b (strain F2365)</name>
    <dbReference type="NCBI Taxonomy" id="265669"/>
    <lineage>
        <taxon>Bacteria</taxon>
        <taxon>Bacillati</taxon>
        <taxon>Bacillota</taxon>
        <taxon>Bacilli</taxon>
        <taxon>Bacillales</taxon>
        <taxon>Listeriaceae</taxon>
        <taxon>Listeria</taxon>
    </lineage>
</organism>